<name>PURQ_LISMF</name>
<protein>
    <recommendedName>
        <fullName evidence="1">Phosphoribosylformylglycinamidine synthase subunit PurQ</fullName>
        <shortName evidence="1">FGAM synthase</shortName>
        <ecNumber evidence="1">6.3.5.3</ecNumber>
    </recommendedName>
    <alternativeName>
        <fullName evidence="1">Formylglycinamide ribonucleotide amidotransferase subunit I</fullName>
        <shortName evidence="1">FGAR amidotransferase I</shortName>
        <shortName evidence="1">FGAR-AT I</shortName>
    </alternativeName>
    <alternativeName>
        <fullName evidence="1">Glutaminase PurQ</fullName>
        <ecNumber evidence="1">3.5.1.2</ecNumber>
    </alternativeName>
    <alternativeName>
        <fullName evidence="1">Phosphoribosylformylglycinamidine synthase subunit I</fullName>
    </alternativeName>
</protein>
<comment type="function">
    <text evidence="1">Part of the phosphoribosylformylglycinamidine synthase complex involved in the purines biosynthetic pathway. Catalyzes the ATP-dependent conversion of formylglycinamide ribonucleotide (FGAR) and glutamine to yield formylglycinamidine ribonucleotide (FGAM) and glutamate. The FGAM synthase complex is composed of three subunits. PurQ produces an ammonia molecule by converting glutamine to glutamate. PurL transfers the ammonia molecule to FGAR to form FGAM in an ATP-dependent manner. PurS interacts with PurQ and PurL and is thought to assist in the transfer of the ammonia molecule from PurQ to PurL.</text>
</comment>
<comment type="catalytic activity">
    <reaction evidence="1">
        <text>N(2)-formyl-N(1)-(5-phospho-beta-D-ribosyl)glycinamide + L-glutamine + ATP + H2O = 2-formamido-N(1)-(5-O-phospho-beta-D-ribosyl)acetamidine + L-glutamate + ADP + phosphate + H(+)</text>
        <dbReference type="Rhea" id="RHEA:17129"/>
        <dbReference type="ChEBI" id="CHEBI:15377"/>
        <dbReference type="ChEBI" id="CHEBI:15378"/>
        <dbReference type="ChEBI" id="CHEBI:29985"/>
        <dbReference type="ChEBI" id="CHEBI:30616"/>
        <dbReference type="ChEBI" id="CHEBI:43474"/>
        <dbReference type="ChEBI" id="CHEBI:58359"/>
        <dbReference type="ChEBI" id="CHEBI:147286"/>
        <dbReference type="ChEBI" id="CHEBI:147287"/>
        <dbReference type="ChEBI" id="CHEBI:456216"/>
        <dbReference type="EC" id="6.3.5.3"/>
    </reaction>
</comment>
<comment type="catalytic activity">
    <reaction evidence="1">
        <text>L-glutamine + H2O = L-glutamate + NH4(+)</text>
        <dbReference type="Rhea" id="RHEA:15889"/>
        <dbReference type="ChEBI" id="CHEBI:15377"/>
        <dbReference type="ChEBI" id="CHEBI:28938"/>
        <dbReference type="ChEBI" id="CHEBI:29985"/>
        <dbReference type="ChEBI" id="CHEBI:58359"/>
        <dbReference type="EC" id="3.5.1.2"/>
    </reaction>
</comment>
<comment type="pathway">
    <text evidence="1">Purine metabolism; IMP biosynthesis via de novo pathway; 5-amino-1-(5-phospho-D-ribosyl)imidazole from N(2)-formyl-N(1)-(5-phospho-D-ribosyl)glycinamide: step 1/2.</text>
</comment>
<comment type="subunit">
    <text evidence="1">Part of the FGAM synthase complex composed of 1 PurL, 1 PurQ and 2 PurS subunits.</text>
</comment>
<comment type="subcellular location">
    <subcellularLocation>
        <location evidence="1">Cytoplasm</location>
    </subcellularLocation>
</comment>
<organism>
    <name type="scientific">Listeria monocytogenes serotype 4b (strain F2365)</name>
    <dbReference type="NCBI Taxonomy" id="265669"/>
    <lineage>
        <taxon>Bacteria</taxon>
        <taxon>Bacillati</taxon>
        <taxon>Bacillota</taxon>
        <taxon>Bacilli</taxon>
        <taxon>Bacillales</taxon>
        <taxon>Listeriaceae</taxon>
        <taxon>Listeria</taxon>
    </lineage>
</organism>
<reference key="1">
    <citation type="journal article" date="2004" name="Nucleic Acids Res.">
        <title>Whole genome comparisons of serotype 4b and 1/2a strains of the food-borne pathogen Listeria monocytogenes reveal new insights into the core genome components of this species.</title>
        <authorList>
            <person name="Nelson K.E."/>
            <person name="Fouts D.E."/>
            <person name="Mongodin E.F."/>
            <person name="Ravel J."/>
            <person name="DeBoy R.T."/>
            <person name="Kolonay J.F."/>
            <person name="Rasko D.A."/>
            <person name="Angiuoli S.V."/>
            <person name="Gill S.R."/>
            <person name="Paulsen I.T."/>
            <person name="Peterson J.D."/>
            <person name="White O."/>
            <person name="Nelson W.C."/>
            <person name="Nierman W.C."/>
            <person name="Beanan M.J."/>
            <person name="Brinkac L.M."/>
            <person name="Daugherty S.C."/>
            <person name="Dodson R.J."/>
            <person name="Durkin A.S."/>
            <person name="Madupu R."/>
            <person name="Haft D.H."/>
            <person name="Selengut J."/>
            <person name="Van Aken S.E."/>
            <person name="Khouri H.M."/>
            <person name="Fedorova N."/>
            <person name="Forberger H.A."/>
            <person name="Tran B."/>
            <person name="Kathariou S."/>
            <person name="Wonderling L.D."/>
            <person name="Uhlich G.A."/>
            <person name="Bayles D.O."/>
            <person name="Luchansky J.B."/>
            <person name="Fraser C.M."/>
        </authorList>
    </citation>
    <scope>NUCLEOTIDE SEQUENCE [LARGE SCALE GENOMIC DNA]</scope>
    <source>
        <strain>F2365</strain>
    </source>
</reference>
<proteinExistence type="inferred from homology"/>
<gene>
    <name evidence="1" type="primary">purQ</name>
    <name type="ordered locus">LMOf2365_1795</name>
</gene>
<keyword id="KW-0067">ATP-binding</keyword>
<keyword id="KW-0963">Cytoplasm</keyword>
<keyword id="KW-0315">Glutamine amidotransferase</keyword>
<keyword id="KW-0378">Hydrolase</keyword>
<keyword id="KW-0436">Ligase</keyword>
<keyword id="KW-0547">Nucleotide-binding</keyword>
<keyword id="KW-0658">Purine biosynthesis</keyword>
<dbReference type="EC" id="6.3.5.3" evidence="1"/>
<dbReference type="EC" id="3.5.1.2" evidence="1"/>
<dbReference type="EMBL" id="AE017262">
    <property type="protein sequence ID" value="AAT04566.1"/>
    <property type="molecule type" value="Genomic_DNA"/>
</dbReference>
<dbReference type="RefSeq" id="WP_003726212.1">
    <property type="nucleotide sequence ID" value="NC_002973.6"/>
</dbReference>
<dbReference type="SMR" id="Q71YP8"/>
<dbReference type="KEGG" id="lmf:LMOf2365_1795"/>
<dbReference type="HOGENOM" id="CLU_001031_3_1_9"/>
<dbReference type="UniPathway" id="UPA00074">
    <property type="reaction ID" value="UER00128"/>
</dbReference>
<dbReference type="GO" id="GO:0005737">
    <property type="term" value="C:cytoplasm"/>
    <property type="evidence" value="ECO:0007669"/>
    <property type="project" value="UniProtKB-SubCell"/>
</dbReference>
<dbReference type="GO" id="GO:0005524">
    <property type="term" value="F:ATP binding"/>
    <property type="evidence" value="ECO:0007669"/>
    <property type="project" value="UniProtKB-KW"/>
</dbReference>
<dbReference type="GO" id="GO:0004359">
    <property type="term" value="F:glutaminase activity"/>
    <property type="evidence" value="ECO:0007669"/>
    <property type="project" value="UniProtKB-EC"/>
</dbReference>
<dbReference type="GO" id="GO:0004642">
    <property type="term" value="F:phosphoribosylformylglycinamidine synthase activity"/>
    <property type="evidence" value="ECO:0007669"/>
    <property type="project" value="UniProtKB-UniRule"/>
</dbReference>
<dbReference type="GO" id="GO:0006189">
    <property type="term" value="P:'de novo' IMP biosynthetic process"/>
    <property type="evidence" value="ECO:0007669"/>
    <property type="project" value="UniProtKB-UniRule"/>
</dbReference>
<dbReference type="CDD" id="cd01740">
    <property type="entry name" value="GATase1_FGAR_AT"/>
    <property type="match status" value="1"/>
</dbReference>
<dbReference type="FunFam" id="3.40.50.880:FF:000019">
    <property type="entry name" value="Phosphoribosylformylglycinamidine synthase subunit PurQ"/>
    <property type="match status" value="1"/>
</dbReference>
<dbReference type="Gene3D" id="3.40.50.880">
    <property type="match status" value="1"/>
</dbReference>
<dbReference type="HAMAP" id="MF_00421">
    <property type="entry name" value="PurQ"/>
    <property type="match status" value="1"/>
</dbReference>
<dbReference type="InterPro" id="IPR029062">
    <property type="entry name" value="Class_I_gatase-like"/>
</dbReference>
<dbReference type="InterPro" id="IPR010075">
    <property type="entry name" value="PRibForGlyAmidine_synth_PurQ"/>
</dbReference>
<dbReference type="NCBIfam" id="TIGR01737">
    <property type="entry name" value="FGAM_synth_I"/>
    <property type="match status" value="1"/>
</dbReference>
<dbReference type="NCBIfam" id="NF002957">
    <property type="entry name" value="PRK03619.1"/>
    <property type="match status" value="1"/>
</dbReference>
<dbReference type="PANTHER" id="PTHR47552">
    <property type="entry name" value="PHOSPHORIBOSYLFORMYLGLYCINAMIDINE SYNTHASE SUBUNIT PURQ"/>
    <property type="match status" value="1"/>
</dbReference>
<dbReference type="PANTHER" id="PTHR47552:SF1">
    <property type="entry name" value="PHOSPHORIBOSYLFORMYLGLYCINAMIDINE SYNTHASE SUBUNIT PURQ"/>
    <property type="match status" value="1"/>
</dbReference>
<dbReference type="Pfam" id="PF13507">
    <property type="entry name" value="GATase_5"/>
    <property type="match status" value="1"/>
</dbReference>
<dbReference type="PIRSF" id="PIRSF001586">
    <property type="entry name" value="FGAM_synth_I"/>
    <property type="match status" value="1"/>
</dbReference>
<dbReference type="SMART" id="SM01211">
    <property type="entry name" value="GATase_5"/>
    <property type="match status" value="1"/>
</dbReference>
<dbReference type="SUPFAM" id="SSF52317">
    <property type="entry name" value="Class I glutamine amidotransferase-like"/>
    <property type="match status" value="1"/>
</dbReference>
<dbReference type="PROSITE" id="PS51273">
    <property type="entry name" value="GATASE_TYPE_1"/>
    <property type="match status" value="1"/>
</dbReference>
<evidence type="ECO:0000255" key="1">
    <source>
        <dbReference type="HAMAP-Rule" id="MF_00421"/>
    </source>
</evidence>
<accession>Q71YP8</accession>
<sequence>MKFAVIQFPGSNCDLDMLHAIRDSLGEEAEYVWHAETSLAGFDAVLLPGGFSYGDYLRTGAIAKFSSIMPEVLRFAEMGKPVLGVCNGFQILTEIGLLPGALIRNNNLHFICKTVPLRVANASTMFTGLYKEGEIIQVPVAHGEGNYYCDDETLLKLKDNNQIVFTYDSVNPNGSRADIAGIVNERGNVLGMMPHPERAVEEIIGGTDGLRLFESVVKAWKEEQVNA</sequence>
<feature type="chain" id="PRO_0000100567" description="Phosphoribosylformylglycinamidine synthase subunit PurQ">
    <location>
        <begin position="1"/>
        <end position="227"/>
    </location>
</feature>
<feature type="domain" description="Glutamine amidotransferase type-1" evidence="1">
    <location>
        <begin position="2"/>
        <end position="226"/>
    </location>
</feature>
<feature type="active site" description="Nucleophile" evidence="1">
    <location>
        <position position="86"/>
    </location>
</feature>
<feature type="active site" evidence="1">
    <location>
        <position position="195"/>
    </location>
</feature>
<feature type="active site" evidence="1">
    <location>
        <position position="197"/>
    </location>
</feature>